<reference key="1">
    <citation type="journal article" date="1999" name="Nature">
        <title>Sequence and analysis of chromosome 2 of the plant Arabidopsis thaliana.</title>
        <authorList>
            <person name="Lin X."/>
            <person name="Kaul S."/>
            <person name="Rounsley S.D."/>
            <person name="Shea T.P."/>
            <person name="Benito M.-I."/>
            <person name="Town C.D."/>
            <person name="Fujii C.Y."/>
            <person name="Mason T.M."/>
            <person name="Bowman C.L."/>
            <person name="Barnstead M.E."/>
            <person name="Feldblyum T.V."/>
            <person name="Buell C.R."/>
            <person name="Ketchum K.A."/>
            <person name="Lee J.J."/>
            <person name="Ronning C.M."/>
            <person name="Koo H.L."/>
            <person name="Moffat K.S."/>
            <person name="Cronin L.A."/>
            <person name="Shen M."/>
            <person name="Pai G."/>
            <person name="Van Aken S."/>
            <person name="Umayam L."/>
            <person name="Tallon L.J."/>
            <person name="Gill J.E."/>
            <person name="Adams M.D."/>
            <person name="Carrera A.J."/>
            <person name="Creasy T.H."/>
            <person name="Goodman H.M."/>
            <person name="Somerville C.R."/>
            <person name="Copenhaver G.P."/>
            <person name="Preuss D."/>
            <person name="Nierman W.C."/>
            <person name="White O."/>
            <person name="Eisen J.A."/>
            <person name="Salzberg S.L."/>
            <person name="Fraser C.M."/>
            <person name="Venter J.C."/>
        </authorList>
    </citation>
    <scope>NUCLEOTIDE SEQUENCE [LARGE SCALE GENOMIC DNA]</scope>
    <source>
        <strain>cv. Columbia</strain>
    </source>
</reference>
<reference key="2">
    <citation type="journal article" date="2017" name="Plant J.">
        <title>Araport11: a complete reannotation of the Arabidopsis thaliana reference genome.</title>
        <authorList>
            <person name="Cheng C.Y."/>
            <person name="Krishnakumar V."/>
            <person name="Chan A.P."/>
            <person name="Thibaud-Nissen F."/>
            <person name="Schobel S."/>
            <person name="Town C.D."/>
        </authorList>
    </citation>
    <scope>GENOME REANNOTATION</scope>
    <source>
        <strain>cv. Columbia</strain>
    </source>
</reference>
<reference key="3">
    <citation type="journal article" date="2003" name="Science">
        <title>Empirical analysis of transcriptional activity in the Arabidopsis genome.</title>
        <authorList>
            <person name="Yamada K."/>
            <person name="Lim J."/>
            <person name="Dale J.M."/>
            <person name="Chen H."/>
            <person name="Shinn P."/>
            <person name="Palm C.J."/>
            <person name="Southwick A.M."/>
            <person name="Wu H.C."/>
            <person name="Kim C.J."/>
            <person name="Nguyen M."/>
            <person name="Pham P.K."/>
            <person name="Cheuk R.F."/>
            <person name="Karlin-Newmann G."/>
            <person name="Liu S.X."/>
            <person name="Lam B."/>
            <person name="Sakano H."/>
            <person name="Wu T."/>
            <person name="Yu G."/>
            <person name="Miranda M."/>
            <person name="Quach H.L."/>
            <person name="Tripp M."/>
            <person name="Chang C.H."/>
            <person name="Lee J.M."/>
            <person name="Toriumi M.J."/>
            <person name="Chan M.M."/>
            <person name="Tang C.C."/>
            <person name="Onodera C.S."/>
            <person name="Deng J.M."/>
            <person name="Akiyama K."/>
            <person name="Ansari Y."/>
            <person name="Arakawa T."/>
            <person name="Banh J."/>
            <person name="Banno F."/>
            <person name="Bowser L."/>
            <person name="Brooks S.Y."/>
            <person name="Carninci P."/>
            <person name="Chao Q."/>
            <person name="Choy N."/>
            <person name="Enju A."/>
            <person name="Goldsmith A.D."/>
            <person name="Gurjal M."/>
            <person name="Hansen N.F."/>
            <person name="Hayashizaki Y."/>
            <person name="Johnson-Hopson C."/>
            <person name="Hsuan V.W."/>
            <person name="Iida K."/>
            <person name="Karnes M."/>
            <person name="Khan S."/>
            <person name="Koesema E."/>
            <person name="Ishida J."/>
            <person name="Jiang P.X."/>
            <person name="Jones T."/>
            <person name="Kawai J."/>
            <person name="Kamiya A."/>
            <person name="Meyers C."/>
            <person name="Nakajima M."/>
            <person name="Narusaka M."/>
            <person name="Seki M."/>
            <person name="Sakurai T."/>
            <person name="Satou M."/>
            <person name="Tamse R."/>
            <person name="Vaysberg M."/>
            <person name="Wallender E.K."/>
            <person name="Wong C."/>
            <person name="Yamamura Y."/>
            <person name="Yuan S."/>
            <person name="Shinozaki K."/>
            <person name="Davis R.W."/>
            <person name="Theologis A."/>
            <person name="Ecker J.R."/>
        </authorList>
    </citation>
    <scope>NUCLEOTIDE SEQUENCE [LARGE SCALE MRNA]</scope>
    <source>
        <strain>cv. Columbia</strain>
    </source>
</reference>
<reference key="4">
    <citation type="journal article" date="2010" name="Trends Plant Sci.">
        <title>Proteasomal recognition of ubiquitylated substrates.</title>
        <authorList>
            <person name="Fu H."/>
            <person name="Lin Y.L."/>
            <person name="Fatimababy A.S."/>
        </authorList>
    </citation>
    <scope>REVIEW</scope>
</reference>
<reference key="5">
    <citation type="journal article" date="2011" name="Plant Cell">
        <title>The defective proteasome but not substrate recognition function is responsible for the null phenotypes of the Arabidopsis proteasome subunit RPN10.</title>
        <authorList>
            <person name="Lin Y.-L."/>
            <person name="Sung S.-C."/>
            <person name="Tsai H.-L."/>
            <person name="Yu T.-T."/>
            <person name="Radjacommare R."/>
            <person name="Usharani R."/>
            <person name="Fatimababy A.S."/>
            <person name="Lin H.-Y."/>
            <person name="Wang Y.-Y."/>
            <person name="Fu H."/>
        </authorList>
    </citation>
    <scope>FUNCTION</scope>
    <scope>POLYUBIQUITIN BINDING</scope>
    <scope>INTERACTION WITH RPN10</scope>
    <scope>MUTAGENESIS OF ILE-61 AND VAL-87</scope>
</reference>
<reference key="6">
    <citation type="journal article" date="2013" name="J. Integr. Plant Biol.">
        <title>Arabidopsis RING peroxins are E3 ubiquitin ligases that interact with two homologous ubiquitin receptor proteins(F).</title>
        <authorList>
            <person name="Kaur N."/>
            <person name="Zhao Q."/>
            <person name="Xie Q."/>
            <person name="Hu J."/>
        </authorList>
    </citation>
    <scope>INTERACTION WITH PEX2 AND PEX12</scope>
    <scope>SUBCELLULAR LOCATION</scope>
    <scope>TISSUE SPECIFICITY</scope>
</reference>
<name>DSK2B_ARATH</name>
<comment type="function">
    <text evidence="4">Binds and presumably selects ubiquitin-conjugates for destruction. Prefers multiubiquitin chains rather than single ubiquitins, with a binding affinity for 'Lys-48'-linked ubiquitin chains. Acts as a ubiquitin receptor that associates with the 26S proteasomal docking subunit RPN10 for the indirect recognition of ubiquitinated substrates of ubiquitin/26S proteasome-mediated proteolysis (UPP).</text>
</comment>
<comment type="subunit">
    <text evidence="4 5">Interacts with 'Lys-48'-linked polyubiquitin chains via its UBA domain. Interacts with RPN10 via its ubiquitin-like domain. Interacts with PEX2 and PEX12.</text>
</comment>
<comment type="interaction">
    <interactant intactId="EBI-4433040">
        <id>Q9SII8</id>
    </interactant>
    <interactant intactId="EBI-4470254">
        <id>Q9CA86</id>
        <label>PEX2</label>
    </interactant>
    <organismsDiffer>false</organismsDiffer>
    <experiments>4</experiments>
</comment>
<comment type="interaction">
    <interactant intactId="EBI-4433040">
        <id>Q9SII8</id>
    </interactant>
    <interactant intactId="EBI-2620423">
        <id>P55034</id>
        <label>RPN10</label>
    </interactant>
    <organismsDiffer>false</organismsDiffer>
    <experiments>2</experiments>
</comment>
<comment type="interaction">
    <interactant intactId="EBI-4433040">
        <id>Q9SII8</id>
    </interactant>
    <interactant intactId="EBI-7710745">
        <id>O48726</id>
        <label>RPN13</label>
    </interactant>
    <organismsDiffer>false</organismsDiffer>
    <experiments>5</experiments>
</comment>
<comment type="subcellular location">
    <subcellularLocation>
        <location evidence="5">Nucleus</location>
    </subcellularLocation>
    <subcellularLocation>
        <location evidence="5">Cytoplasm</location>
    </subcellularLocation>
</comment>
<comment type="tissue specificity">
    <text evidence="5">Ubiquitous.</text>
</comment>
<gene>
    <name type="primary">DSK2B</name>
    <name type="ordered locus">At2g17200</name>
    <name type="ORF">T23A1.6</name>
</gene>
<dbReference type="EMBL" id="AC007127">
    <property type="protein sequence ID" value="AAD25138.1"/>
    <property type="molecule type" value="Genomic_DNA"/>
</dbReference>
<dbReference type="EMBL" id="CP002685">
    <property type="protein sequence ID" value="AEC06597.1"/>
    <property type="molecule type" value="Genomic_DNA"/>
</dbReference>
<dbReference type="EMBL" id="AY035177">
    <property type="protein sequence ID" value="AAK59681.1"/>
    <property type="molecule type" value="mRNA"/>
</dbReference>
<dbReference type="EMBL" id="AY142486">
    <property type="protein sequence ID" value="AAN13037.1"/>
    <property type="molecule type" value="mRNA"/>
</dbReference>
<dbReference type="PIR" id="C84549">
    <property type="entry name" value="C84549"/>
</dbReference>
<dbReference type="RefSeq" id="NP_179311.1">
    <property type="nucleotide sequence ID" value="NM_127274.3"/>
</dbReference>
<dbReference type="SMR" id="Q9SII8"/>
<dbReference type="BioGRID" id="1582">
    <property type="interactions" value="9"/>
</dbReference>
<dbReference type="FunCoup" id="Q9SII8">
    <property type="interactions" value="4613"/>
</dbReference>
<dbReference type="IntAct" id="Q9SII8">
    <property type="interactions" value="10"/>
</dbReference>
<dbReference type="MINT" id="Q9SII8"/>
<dbReference type="STRING" id="3702.Q9SII8"/>
<dbReference type="GlyGen" id="Q9SII8">
    <property type="glycosylation" value="1 site"/>
</dbReference>
<dbReference type="PaxDb" id="3702-AT2G17200.1"/>
<dbReference type="ProteomicsDB" id="221909"/>
<dbReference type="EnsemblPlants" id="AT2G17200.1">
    <property type="protein sequence ID" value="AT2G17200.1"/>
    <property type="gene ID" value="AT2G17200"/>
</dbReference>
<dbReference type="GeneID" id="816225"/>
<dbReference type="Gramene" id="AT2G17200.1">
    <property type="protein sequence ID" value="AT2G17200.1"/>
    <property type="gene ID" value="AT2G17200"/>
</dbReference>
<dbReference type="KEGG" id="ath:AT2G17200"/>
<dbReference type="Araport" id="AT2G17200"/>
<dbReference type="TAIR" id="AT2G17200">
    <property type="gene designation" value="DSK2B"/>
</dbReference>
<dbReference type="eggNOG" id="KOG0010">
    <property type="taxonomic scope" value="Eukaryota"/>
</dbReference>
<dbReference type="HOGENOM" id="CLU_024293_4_0_1"/>
<dbReference type="InParanoid" id="Q9SII8"/>
<dbReference type="OMA" id="MRPEMME"/>
<dbReference type="PhylomeDB" id="Q9SII8"/>
<dbReference type="PRO" id="PR:Q9SII8"/>
<dbReference type="Proteomes" id="UP000006548">
    <property type="component" value="Chromosome 2"/>
</dbReference>
<dbReference type="ExpressionAtlas" id="Q9SII8">
    <property type="expression patterns" value="baseline and differential"/>
</dbReference>
<dbReference type="GO" id="GO:0005829">
    <property type="term" value="C:cytosol"/>
    <property type="evidence" value="ECO:0000314"/>
    <property type="project" value="TAIR"/>
</dbReference>
<dbReference type="GO" id="GO:0005739">
    <property type="term" value="C:mitochondrion"/>
    <property type="evidence" value="ECO:0007005"/>
    <property type="project" value="TAIR"/>
</dbReference>
<dbReference type="GO" id="GO:0005634">
    <property type="term" value="C:nucleus"/>
    <property type="evidence" value="ECO:0000314"/>
    <property type="project" value="TAIR"/>
</dbReference>
<dbReference type="GO" id="GO:0031593">
    <property type="term" value="F:polyubiquitin modification-dependent protein binding"/>
    <property type="evidence" value="ECO:0000314"/>
    <property type="project" value="UniProtKB"/>
</dbReference>
<dbReference type="CDD" id="cd14399">
    <property type="entry name" value="UBA_PLICs"/>
    <property type="match status" value="1"/>
</dbReference>
<dbReference type="CDD" id="cd16106">
    <property type="entry name" value="Ubl_Dsk2p_like"/>
    <property type="match status" value="1"/>
</dbReference>
<dbReference type="FunFam" id="1.10.260.100:FF:000005">
    <property type="entry name" value="Ubiquitin domain-containing protein DSK2b"/>
    <property type="match status" value="1"/>
</dbReference>
<dbReference type="FunFam" id="3.10.20.90:FF:000183">
    <property type="entry name" value="Ubiquitin domain-containing protein DSK2b"/>
    <property type="match status" value="1"/>
</dbReference>
<dbReference type="FunFam" id="1.10.8.10:FF:000079">
    <property type="entry name" value="Ubiquitin family protein"/>
    <property type="match status" value="1"/>
</dbReference>
<dbReference type="Gene3D" id="1.10.260.100">
    <property type="match status" value="1"/>
</dbReference>
<dbReference type="Gene3D" id="1.10.8.10">
    <property type="entry name" value="DNA helicase RuvA subunit, C-terminal domain"/>
    <property type="match status" value="1"/>
</dbReference>
<dbReference type="Gene3D" id="3.10.20.90">
    <property type="entry name" value="Phosphatidylinositol 3-kinase Catalytic Subunit, Chain A, domain 1"/>
    <property type="match status" value="1"/>
</dbReference>
<dbReference type="InterPro" id="IPR006636">
    <property type="entry name" value="STI1_HS-bd"/>
</dbReference>
<dbReference type="InterPro" id="IPR015940">
    <property type="entry name" value="UBA"/>
</dbReference>
<dbReference type="InterPro" id="IPR009060">
    <property type="entry name" value="UBA-like_sf"/>
</dbReference>
<dbReference type="InterPro" id="IPR015496">
    <property type="entry name" value="Ubiquilin"/>
</dbReference>
<dbReference type="InterPro" id="IPR000626">
    <property type="entry name" value="Ubiquitin-like_dom"/>
</dbReference>
<dbReference type="InterPro" id="IPR029071">
    <property type="entry name" value="Ubiquitin-like_domsf"/>
</dbReference>
<dbReference type="PANTHER" id="PTHR10677:SF3">
    <property type="entry name" value="FI07626P-RELATED"/>
    <property type="match status" value="1"/>
</dbReference>
<dbReference type="PANTHER" id="PTHR10677">
    <property type="entry name" value="UBIQUILIN"/>
    <property type="match status" value="1"/>
</dbReference>
<dbReference type="Pfam" id="PF00627">
    <property type="entry name" value="UBA"/>
    <property type="match status" value="1"/>
</dbReference>
<dbReference type="Pfam" id="PF00240">
    <property type="entry name" value="ubiquitin"/>
    <property type="match status" value="1"/>
</dbReference>
<dbReference type="Pfam" id="PF23195">
    <property type="entry name" value="UBQLN1"/>
    <property type="match status" value="2"/>
</dbReference>
<dbReference type="SMART" id="SM00727">
    <property type="entry name" value="STI1"/>
    <property type="match status" value="4"/>
</dbReference>
<dbReference type="SMART" id="SM00165">
    <property type="entry name" value="UBA"/>
    <property type="match status" value="1"/>
</dbReference>
<dbReference type="SMART" id="SM00213">
    <property type="entry name" value="UBQ"/>
    <property type="match status" value="1"/>
</dbReference>
<dbReference type="SUPFAM" id="SSF46934">
    <property type="entry name" value="UBA-like"/>
    <property type="match status" value="1"/>
</dbReference>
<dbReference type="SUPFAM" id="SSF54236">
    <property type="entry name" value="Ubiquitin-like"/>
    <property type="match status" value="1"/>
</dbReference>
<dbReference type="PROSITE" id="PS50030">
    <property type="entry name" value="UBA"/>
    <property type="match status" value="1"/>
</dbReference>
<dbReference type="PROSITE" id="PS50053">
    <property type="entry name" value="UBIQUITIN_2"/>
    <property type="match status" value="1"/>
</dbReference>
<keyword id="KW-0963">Cytoplasm</keyword>
<keyword id="KW-0539">Nucleus</keyword>
<keyword id="KW-1185">Reference proteome</keyword>
<keyword id="KW-0677">Repeat</keyword>
<proteinExistence type="evidence at protein level"/>
<organism>
    <name type="scientific">Arabidopsis thaliana</name>
    <name type="common">Mouse-ear cress</name>
    <dbReference type="NCBI Taxonomy" id="3702"/>
    <lineage>
        <taxon>Eukaryota</taxon>
        <taxon>Viridiplantae</taxon>
        <taxon>Streptophyta</taxon>
        <taxon>Embryophyta</taxon>
        <taxon>Tracheophyta</taxon>
        <taxon>Spermatophyta</taxon>
        <taxon>Magnoliopsida</taxon>
        <taxon>eudicotyledons</taxon>
        <taxon>Gunneridae</taxon>
        <taxon>Pentapetalae</taxon>
        <taxon>rosids</taxon>
        <taxon>malvids</taxon>
        <taxon>Brassicales</taxon>
        <taxon>Brassicaceae</taxon>
        <taxon>Camelineae</taxon>
        <taxon>Arabidopsis</taxon>
    </lineage>
</organism>
<feature type="chain" id="PRO_0000423180" description="Ubiquitin domain-containing protein DSK2b">
    <location>
        <begin position="1"/>
        <end position="551"/>
    </location>
</feature>
<feature type="domain" description="Ubiquitin-like" evidence="2">
    <location>
        <begin position="18"/>
        <end position="93"/>
    </location>
</feature>
<feature type="domain" description="STI1 1">
    <location>
        <begin position="143"/>
        <end position="184"/>
    </location>
</feature>
<feature type="domain" description="STI1 2">
    <location>
        <begin position="197"/>
        <end position="236"/>
    </location>
</feature>
<feature type="domain" description="STI1 3">
    <location>
        <begin position="373"/>
        <end position="410"/>
    </location>
</feature>
<feature type="domain" description="STI1 4">
    <location>
        <begin position="414"/>
        <end position="449"/>
    </location>
</feature>
<feature type="domain" description="UBA" evidence="1">
    <location>
        <begin position="504"/>
        <end position="548"/>
    </location>
</feature>
<feature type="region of interest" description="Disordered" evidence="3">
    <location>
        <begin position="88"/>
        <end position="127"/>
    </location>
</feature>
<feature type="region of interest" description="Disordered" evidence="3">
    <location>
        <begin position="294"/>
        <end position="336"/>
    </location>
</feature>
<feature type="region of interest" description="Disordered" evidence="3">
    <location>
        <begin position="455"/>
        <end position="475"/>
    </location>
</feature>
<feature type="compositionally biased region" description="Polar residues" evidence="3">
    <location>
        <begin position="294"/>
        <end position="319"/>
    </location>
</feature>
<feature type="compositionally biased region" description="Low complexity" evidence="3">
    <location>
        <begin position="465"/>
        <end position="475"/>
    </location>
</feature>
<feature type="mutagenesis site" description="Strongly reduces interaction with RPN10." evidence="4">
    <original>I</original>
    <variation>A</variation>
    <location>
        <position position="61"/>
    </location>
</feature>
<feature type="mutagenesis site" description="Abolishes interaction with RPN10." evidence="4">
    <original>V</original>
    <variation>A</variation>
    <location>
        <position position="87"/>
    </location>
</feature>
<feature type="sequence conflict" description="In Ref. 3; AAK59681." evidence="6" ref="3">
    <original>D</original>
    <variation>N</variation>
    <location>
        <position position="345"/>
    </location>
</feature>
<evidence type="ECO:0000255" key="1">
    <source>
        <dbReference type="PROSITE-ProRule" id="PRU00212"/>
    </source>
</evidence>
<evidence type="ECO:0000255" key="2">
    <source>
        <dbReference type="PROSITE-ProRule" id="PRU00214"/>
    </source>
</evidence>
<evidence type="ECO:0000256" key="3">
    <source>
        <dbReference type="SAM" id="MobiDB-lite"/>
    </source>
</evidence>
<evidence type="ECO:0000269" key="4">
    <source>
    </source>
</evidence>
<evidence type="ECO:0000269" key="5">
    <source>
    </source>
</evidence>
<evidence type="ECO:0000305" key="6"/>
<protein>
    <recommendedName>
        <fullName>Ubiquitin domain-containing protein DSK2b</fullName>
    </recommendedName>
</protein>
<sequence length="551" mass="58054">MGGEGDSSQPQSGEGEAVAVNIRCSNGTKFSVKTSLDSTVESFKELVAQSSDVPANQQRLIYKGRILKDDQTLLSYGLQADHTIHMVRGSAPSSAPPPAPAASQTTAPSVTRGVGSDNSSNLGGASPGESLFPGLGFNPLGGGNAMSGLFGAGLPDLVQTQQQLAQNPNMIRDMMNTPAIQNLMNNPEFMRSMIMNNPQMRELVDRNPELGHVLNDPSILRQTLEAARNPELMREMMRNTDRAMSNIESMPEGFNMLRRMYENVQEPLMNATTMSGNAGNNTGSNPFAALLGNQGVTTQGSDASNNSSTPNAGTGTIPNANPLPNPWGATGGQTTAPGRTNVGGDARSPGLGGLGGLGSLGGLGGLGMLGADSPLGATPDASQLSQLLQNPAISQMMQSVFSNPQYMNQLMSLNPQLRSMLDSNPQLREMMQNPDFLRQFSSPEMMQQMMTLQQSLSQNRNTASQDAGQTGAATGNNGGLDLLMNMFGSLGAGGLSGTNQSNVPPEERYATQLQQLQEMGFYDRAENIRALLATNGNVNAAVERLLGSIGQ</sequence>
<accession>Q9SII8</accession>
<accession>Q94C51</accession>